<organism>
    <name type="scientific">Aliivibrio fischeri (strain MJ11)</name>
    <name type="common">Vibrio fischeri</name>
    <dbReference type="NCBI Taxonomy" id="388396"/>
    <lineage>
        <taxon>Bacteria</taxon>
        <taxon>Pseudomonadati</taxon>
        <taxon>Pseudomonadota</taxon>
        <taxon>Gammaproteobacteria</taxon>
        <taxon>Vibrionales</taxon>
        <taxon>Vibrionaceae</taxon>
        <taxon>Aliivibrio</taxon>
    </lineage>
</organism>
<protein>
    <recommendedName>
        <fullName evidence="1">Dihydroorotate dehydrogenase (quinone)</fullName>
        <ecNumber evidence="1">1.3.5.2</ecNumber>
    </recommendedName>
    <alternativeName>
        <fullName evidence="1">DHOdehase</fullName>
        <shortName evidence="1">DHOD</shortName>
        <shortName evidence="1">DHODase</shortName>
    </alternativeName>
    <alternativeName>
        <fullName evidence="1">Dihydroorotate oxidase</fullName>
    </alternativeName>
</protein>
<reference key="1">
    <citation type="submission" date="2008-08" db="EMBL/GenBank/DDBJ databases">
        <title>Complete sequence of Vibrio fischeri strain MJ11.</title>
        <authorList>
            <person name="Mandel M.J."/>
            <person name="Stabb E.V."/>
            <person name="Ruby E.G."/>
            <person name="Ferriera S."/>
            <person name="Johnson J."/>
            <person name="Kravitz S."/>
            <person name="Beeson K."/>
            <person name="Sutton G."/>
            <person name="Rogers Y.-H."/>
            <person name="Friedman R."/>
            <person name="Frazier M."/>
            <person name="Venter J.C."/>
        </authorList>
    </citation>
    <scope>NUCLEOTIDE SEQUENCE [LARGE SCALE GENOMIC DNA]</scope>
    <source>
        <strain>MJ11</strain>
    </source>
</reference>
<name>PYRD_ALIFM</name>
<accession>B5FE17</accession>
<evidence type="ECO:0000255" key="1">
    <source>
        <dbReference type="HAMAP-Rule" id="MF_00225"/>
    </source>
</evidence>
<feature type="chain" id="PRO_1000100294" description="Dihydroorotate dehydrogenase (quinone)">
    <location>
        <begin position="1"/>
        <end position="336"/>
    </location>
</feature>
<feature type="active site" description="Nucleophile" evidence="1">
    <location>
        <position position="175"/>
    </location>
</feature>
<feature type="binding site" evidence="1">
    <location>
        <begin position="62"/>
        <end position="66"/>
    </location>
    <ligand>
        <name>FMN</name>
        <dbReference type="ChEBI" id="CHEBI:58210"/>
    </ligand>
</feature>
<feature type="binding site" evidence="1">
    <location>
        <position position="66"/>
    </location>
    <ligand>
        <name>substrate</name>
    </ligand>
</feature>
<feature type="binding site" evidence="1">
    <location>
        <position position="86"/>
    </location>
    <ligand>
        <name>FMN</name>
        <dbReference type="ChEBI" id="CHEBI:58210"/>
    </ligand>
</feature>
<feature type="binding site" evidence="1">
    <location>
        <begin position="111"/>
        <end position="115"/>
    </location>
    <ligand>
        <name>substrate</name>
    </ligand>
</feature>
<feature type="binding site" evidence="1">
    <location>
        <position position="139"/>
    </location>
    <ligand>
        <name>FMN</name>
        <dbReference type="ChEBI" id="CHEBI:58210"/>
    </ligand>
</feature>
<feature type="binding site" evidence="1">
    <location>
        <position position="172"/>
    </location>
    <ligand>
        <name>FMN</name>
        <dbReference type="ChEBI" id="CHEBI:58210"/>
    </ligand>
</feature>
<feature type="binding site" evidence="1">
    <location>
        <position position="172"/>
    </location>
    <ligand>
        <name>substrate</name>
    </ligand>
</feature>
<feature type="binding site" evidence="1">
    <location>
        <position position="177"/>
    </location>
    <ligand>
        <name>substrate</name>
    </ligand>
</feature>
<feature type="binding site" evidence="1">
    <location>
        <position position="217"/>
    </location>
    <ligand>
        <name>FMN</name>
        <dbReference type="ChEBI" id="CHEBI:58210"/>
    </ligand>
</feature>
<feature type="binding site" evidence="1">
    <location>
        <position position="245"/>
    </location>
    <ligand>
        <name>FMN</name>
        <dbReference type="ChEBI" id="CHEBI:58210"/>
    </ligand>
</feature>
<feature type="binding site" evidence="1">
    <location>
        <begin position="246"/>
        <end position="247"/>
    </location>
    <ligand>
        <name>substrate</name>
    </ligand>
</feature>
<feature type="binding site" evidence="1">
    <location>
        <position position="268"/>
    </location>
    <ligand>
        <name>FMN</name>
        <dbReference type="ChEBI" id="CHEBI:58210"/>
    </ligand>
</feature>
<feature type="binding site" evidence="1">
    <location>
        <position position="297"/>
    </location>
    <ligand>
        <name>FMN</name>
        <dbReference type="ChEBI" id="CHEBI:58210"/>
    </ligand>
</feature>
<feature type="binding site" evidence="1">
    <location>
        <begin position="318"/>
        <end position="319"/>
    </location>
    <ligand>
        <name>FMN</name>
        <dbReference type="ChEBI" id="CHEBI:58210"/>
    </ligand>
</feature>
<comment type="function">
    <text evidence="1">Catalyzes the conversion of dihydroorotate to orotate with quinone as electron acceptor.</text>
</comment>
<comment type="catalytic activity">
    <reaction evidence="1">
        <text>(S)-dihydroorotate + a quinone = orotate + a quinol</text>
        <dbReference type="Rhea" id="RHEA:30187"/>
        <dbReference type="ChEBI" id="CHEBI:24646"/>
        <dbReference type="ChEBI" id="CHEBI:30839"/>
        <dbReference type="ChEBI" id="CHEBI:30864"/>
        <dbReference type="ChEBI" id="CHEBI:132124"/>
        <dbReference type="EC" id="1.3.5.2"/>
    </reaction>
</comment>
<comment type="cofactor">
    <cofactor evidence="1">
        <name>FMN</name>
        <dbReference type="ChEBI" id="CHEBI:58210"/>
    </cofactor>
    <text evidence="1">Binds 1 FMN per subunit.</text>
</comment>
<comment type="pathway">
    <text evidence="1">Pyrimidine metabolism; UMP biosynthesis via de novo pathway; orotate from (S)-dihydroorotate (quinone route): step 1/1.</text>
</comment>
<comment type="subunit">
    <text evidence="1">Monomer.</text>
</comment>
<comment type="subcellular location">
    <subcellularLocation>
        <location evidence="1">Cell membrane</location>
        <topology evidence="1">Peripheral membrane protein</topology>
    </subcellularLocation>
</comment>
<comment type="similarity">
    <text evidence="1">Belongs to the dihydroorotate dehydrogenase family. Type 2 subfamily.</text>
</comment>
<gene>
    <name evidence="1" type="primary">pyrD</name>
    <name type="ordered locus">VFMJ11_1363</name>
</gene>
<proteinExistence type="inferred from homology"/>
<keyword id="KW-1003">Cell membrane</keyword>
<keyword id="KW-0285">Flavoprotein</keyword>
<keyword id="KW-0288">FMN</keyword>
<keyword id="KW-0472">Membrane</keyword>
<keyword id="KW-0560">Oxidoreductase</keyword>
<keyword id="KW-0665">Pyrimidine biosynthesis</keyword>
<sequence length="336" mass="36939">MLYRIARAGIFKLDAEKAHDLAIQNFKRFNGTPLDIFYRQNLASKPVEVMGIKFKNPVGLAAGLDKNGECIEAFGAMGFGFVEVGTVTPRPQSGNDKPRLFRLIEAEGIINRMGFNNLGVDNLVENVKKAKYDGVIGINIGKNKDTPIEKGTEDYLICMEKVYQYAGYIAINISSPNTPGLRTLQYGEALDDLLSQLKEKQKELAEKYGKYVPVALKIAPDLEDDELTQIAESLIKYKIDGVIATNTTLDRSMVEGMKHAEEMGGLSGRPVQTRSTEVVRRLKELLGDNLPIIGVGGIDSYVAAKEKMVAGAELVQVYSGFIYKGPGLVRDIVNNI</sequence>
<dbReference type="EC" id="1.3.5.2" evidence="1"/>
<dbReference type="EMBL" id="CP001139">
    <property type="protein sequence ID" value="ACH66834.1"/>
    <property type="molecule type" value="Genomic_DNA"/>
</dbReference>
<dbReference type="RefSeq" id="WP_005419204.1">
    <property type="nucleotide sequence ID" value="NC_011184.1"/>
</dbReference>
<dbReference type="SMR" id="B5FE17"/>
<dbReference type="KEGG" id="vfm:VFMJ11_1363"/>
<dbReference type="HOGENOM" id="CLU_013640_2_0_6"/>
<dbReference type="UniPathway" id="UPA00070">
    <property type="reaction ID" value="UER00946"/>
</dbReference>
<dbReference type="Proteomes" id="UP000001857">
    <property type="component" value="Chromosome I"/>
</dbReference>
<dbReference type="GO" id="GO:0005737">
    <property type="term" value="C:cytoplasm"/>
    <property type="evidence" value="ECO:0007669"/>
    <property type="project" value="InterPro"/>
</dbReference>
<dbReference type="GO" id="GO:0005886">
    <property type="term" value="C:plasma membrane"/>
    <property type="evidence" value="ECO:0007669"/>
    <property type="project" value="UniProtKB-SubCell"/>
</dbReference>
<dbReference type="GO" id="GO:0106430">
    <property type="term" value="F:dihydroorotate dehydrogenase (quinone) activity"/>
    <property type="evidence" value="ECO:0007669"/>
    <property type="project" value="UniProtKB-EC"/>
</dbReference>
<dbReference type="GO" id="GO:0006207">
    <property type="term" value="P:'de novo' pyrimidine nucleobase biosynthetic process"/>
    <property type="evidence" value="ECO:0007669"/>
    <property type="project" value="InterPro"/>
</dbReference>
<dbReference type="GO" id="GO:0044205">
    <property type="term" value="P:'de novo' UMP biosynthetic process"/>
    <property type="evidence" value="ECO:0007669"/>
    <property type="project" value="UniProtKB-UniRule"/>
</dbReference>
<dbReference type="CDD" id="cd04738">
    <property type="entry name" value="DHOD_2_like"/>
    <property type="match status" value="1"/>
</dbReference>
<dbReference type="FunFam" id="3.20.20.70:FF:000028">
    <property type="entry name" value="Dihydroorotate dehydrogenase (quinone)"/>
    <property type="match status" value="1"/>
</dbReference>
<dbReference type="Gene3D" id="3.20.20.70">
    <property type="entry name" value="Aldolase class I"/>
    <property type="match status" value="1"/>
</dbReference>
<dbReference type="HAMAP" id="MF_00225">
    <property type="entry name" value="DHO_dh_type2"/>
    <property type="match status" value="1"/>
</dbReference>
<dbReference type="InterPro" id="IPR013785">
    <property type="entry name" value="Aldolase_TIM"/>
</dbReference>
<dbReference type="InterPro" id="IPR050074">
    <property type="entry name" value="DHO_dehydrogenase"/>
</dbReference>
<dbReference type="InterPro" id="IPR012135">
    <property type="entry name" value="Dihydroorotate_DH_1_2"/>
</dbReference>
<dbReference type="InterPro" id="IPR005719">
    <property type="entry name" value="Dihydroorotate_DH_2"/>
</dbReference>
<dbReference type="InterPro" id="IPR005720">
    <property type="entry name" value="Dihydroorotate_DH_cat"/>
</dbReference>
<dbReference type="InterPro" id="IPR001295">
    <property type="entry name" value="Dihydroorotate_DH_CS"/>
</dbReference>
<dbReference type="NCBIfam" id="NF003644">
    <property type="entry name" value="PRK05286.1-1"/>
    <property type="match status" value="1"/>
</dbReference>
<dbReference type="NCBIfam" id="NF003645">
    <property type="entry name" value="PRK05286.1-2"/>
    <property type="match status" value="1"/>
</dbReference>
<dbReference type="NCBIfam" id="NF003646">
    <property type="entry name" value="PRK05286.1-4"/>
    <property type="match status" value="1"/>
</dbReference>
<dbReference type="NCBIfam" id="NF003652">
    <property type="entry name" value="PRK05286.2-5"/>
    <property type="match status" value="1"/>
</dbReference>
<dbReference type="NCBIfam" id="TIGR01036">
    <property type="entry name" value="pyrD_sub2"/>
    <property type="match status" value="1"/>
</dbReference>
<dbReference type="PANTHER" id="PTHR48109:SF4">
    <property type="entry name" value="DIHYDROOROTATE DEHYDROGENASE (QUINONE), MITOCHONDRIAL"/>
    <property type="match status" value="1"/>
</dbReference>
<dbReference type="PANTHER" id="PTHR48109">
    <property type="entry name" value="DIHYDROOROTATE DEHYDROGENASE (QUINONE), MITOCHONDRIAL-RELATED"/>
    <property type="match status" value="1"/>
</dbReference>
<dbReference type="Pfam" id="PF01180">
    <property type="entry name" value="DHO_dh"/>
    <property type="match status" value="1"/>
</dbReference>
<dbReference type="PIRSF" id="PIRSF000164">
    <property type="entry name" value="DHO_oxidase"/>
    <property type="match status" value="1"/>
</dbReference>
<dbReference type="SUPFAM" id="SSF51395">
    <property type="entry name" value="FMN-linked oxidoreductases"/>
    <property type="match status" value="1"/>
</dbReference>
<dbReference type="PROSITE" id="PS00911">
    <property type="entry name" value="DHODEHASE_1"/>
    <property type="match status" value="1"/>
</dbReference>
<dbReference type="PROSITE" id="PS00912">
    <property type="entry name" value="DHODEHASE_2"/>
    <property type="match status" value="1"/>
</dbReference>